<feature type="initiator methionine" description="Removed" evidence="6">
    <location>
        <position position="1"/>
    </location>
</feature>
<feature type="chain" id="PRO_0000122970" description="26S proteasome complex subunit SEM1">
    <location>
        <begin position="2"/>
        <end position="89"/>
    </location>
</feature>
<feature type="modified residue" description="N-acetylserine" evidence="6">
    <location>
        <position position="2"/>
    </location>
</feature>
<feature type="modified residue" description="Phosphoserine" evidence="6">
    <location>
        <position position="12"/>
    </location>
</feature>
<feature type="helix" evidence="7">
    <location>
        <begin position="28"/>
        <end position="31"/>
    </location>
</feature>
<feature type="strand" evidence="7">
    <location>
        <begin position="32"/>
        <end position="34"/>
    </location>
</feature>
<feature type="strand" evidence="9">
    <location>
        <begin position="35"/>
        <end position="37"/>
    </location>
</feature>
<feature type="strand" evidence="8">
    <location>
        <begin position="39"/>
        <end position="41"/>
    </location>
</feature>
<feature type="helix" evidence="8">
    <location>
        <begin position="45"/>
        <end position="47"/>
    </location>
</feature>
<feature type="turn" evidence="8">
    <location>
        <begin position="49"/>
        <end position="55"/>
    </location>
</feature>
<feature type="strand" evidence="8">
    <location>
        <begin position="59"/>
        <end position="61"/>
    </location>
</feature>
<feature type="strand" evidence="7">
    <location>
        <begin position="64"/>
        <end position="67"/>
    </location>
</feature>
<feature type="helix" evidence="7">
    <location>
        <begin position="72"/>
        <end position="87"/>
    </location>
</feature>
<dbReference type="EMBL" id="AF059310">
    <property type="protein sequence ID" value="AAD08804.1"/>
    <property type="molecule type" value="mRNA"/>
</dbReference>
<dbReference type="EMBL" id="AF065136">
    <property type="protein sequence ID" value="AAC96096.1"/>
    <property type="molecule type" value="Genomic_DNA"/>
</dbReference>
<dbReference type="EMBL" id="U28372">
    <property type="status" value="NOT_ANNOTATED_CDS"/>
    <property type="molecule type" value="Genomic_DNA"/>
</dbReference>
<dbReference type="EMBL" id="AY557719">
    <property type="protein sequence ID" value="AAS56045.1"/>
    <property type="molecule type" value="Genomic_DNA"/>
</dbReference>
<dbReference type="EMBL" id="BK006938">
    <property type="protein sequence ID" value="DAA12202.1"/>
    <property type="molecule type" value="Genomic_DNA"/>
</dbReference>
<dbReference type="PIR" id="S78744">
    <property type="entry name" value="S78744"/>
</dbReference>
<dbReference type="RefSeq" id="NP_010651.3">
    <property type="nucleotide sequence ID" value="NM_001184328.3"/>
</dbReference>
<dbReference type="PDB" id="3JCK">
    <property type="method" value="EM"/>
    <property type="resolution" value="3.50 A"/>
    <property type="chains" value="I=1-89"/>
</dbReference>
<dbReference type="PDB" id="3JCO">
    <property type="method" value="EM"/>
    <property type="resolution" value="4.80 A"/>
    <property type="chains" value="Y=1-89"/>
</dbReference>
<dbReference type="PDB" id="3JCP">
    <property type="method" value="EM"/>
    <property type="resolution" value="4.60 A"/>
    <property type="chains" value="Y=1-89"/>
</dbReference>
<dbReference type="PDB" id="3T5V">
    <property type="method" value="X-ray"/>
    <property type="resolution" value="2.90 A"/>
    <property type="chains" value="C/F=1-89"/>
</dbReference>
<dbReference type="PDB" id="4CR2">
    <property type="method" value="EM"/>
    <property type="resolution" value="7.70 A"/>
    <property type="chains" value="Y=1-89"/>
</dbReference>
<dbReference type="PDB" id="4CR3">
    <property type="method" value="EM"/>
    <property type="resolution" value="9.30 A"/>
    <property type="chains" value="Y=1-89"/>
</dbReference>
<dbReference type="PDB" id="4CR4">
    <property type="method" value="EM"/>
    <property type="resolution" value="8.80 A"/>
    <property type="chains" value="Y=1-89"/>
</dbReference>
<dbReference type="PDB" id="4TRQ">
    <property type="method" value="X-ray"/>
    <property type="resolution" value="3.10 A"/>
    <property type="chains" value="C/F=30-89"/>
</dbReference>
<dbReference type="PDB" id="5A5B">
    <property type="method" value="EM"/>
    <property type="resolution" value="9.50 A"/>
    <property type="chains" value="Y=1-89"/>
</dbReference>
<dbReference type="PDB" id="5G5P">
    <property type="method" value="EM"/>
    <property type="resolution" value="5.30 A"/>
    <property type="chains" value="C=1-89"/>
</dbReference>
<dbReference type="PDB" id="5L3T">
    <property type="method" value="X-ray"/>
    <property type="resolution" value="4.93 A"/>
    <property type="chains" value="C=1-89"/>
</dbReference>
<dbReference type="PDB" id="5MPB">
    <property type="method" value="EM"/>
    <property type="resolution" value="7.80 A"/>
    <property type="chains" value="Y=1-89"/>
</dbReference>
<dbReference type="PDB" id="5MPC">
    <property type="method" value="EM"/>
    <property type="resolution" value="7.70 A"/>
    <property type="chains" value="Y=1-89"/>
</dbReference>
<dbReference type="PDB" id="5MPD">
    <property type="method" value="EM"/>
    <property type="resolution" value="4.10 A"/>
    <property type="chains" value="Y=1-89"/>
</dbReference>
<dbReference type="PDB" id="5MPE">
    <property type="method" value="EM"/>
    <property type="resolution" value="4.50 A"/>
    <property type="chains" value="Y=1-89"/>
</dbReference>
<dbReference type="PDB" id="5UBP">
    <property type="method" value="X-ray"/>
    <property type="resolution" value="2.30 A"/>
    <property type="chains" value="C=1-89"/>
</dbReference>
<dbReference type="PDB" id="5WVI">
    <property type="method" value="EM"/>
    <property type="resolution" value="6.30 A"/>
    <property type="chains" value="Y=1-89"/>
</dbReference>
<dbReference type="PDB" id="5WVK">
    <property type="method" value="EM"/>
    <property type="resolution" value="4.20 A"/>
    <property type="chains" value="Y=1-89"/>
</dbReference>
<dbReference type="PDB" id="6FVT">
    <property type="method" value="EM"/>
    <property type="resolution" value="4.10 A"/>
    <property type="chains" value="Y=1-89"/>
</dbReference>
<dbReference type="PDB" id="6FVU">
    <property type="method" value="EM"/>
    <property type="resolution" value="4.50 A"/>
    <property type="chains" value="Y=1-89"/>
</dbReference>
<dbReference type="PDB" id="6FVV">
    <property type="method" value="EM"/>
    <property type="resolution" value="5.40 A"/>
    <property type="chains" value="Y=1-89"/>
</dbReference>
<dbReference type="PDB" id="6FVW">
    <property type="method" value="EM"/>
    <property type="resolution" value="4.50 A"/>
    <property type="chains" value="Y=1-89"/>
</dbReference>
<dbReference type="PDB" id="6FVX">
    <property type="method" value="EM"/>
    <property type="resolution" value="4.90 A"/>
    <property type="chains" value="Y=1-89"/>
</dbReference>
<dbReference type="PDB" id="6FVY">
    <property type="method" value="EM"/>
    <property type="resolution" value="6.10 A"/>
    <property type="chains" value="Y=1-89"/>
</dbReference>
<dbReference type="PDB" id="6J2C">
    <property type="method" value="EM"/>
    <property type="resolution" value="7.00 A"/>
    <property type="chains" value="Y=1-89"/>
</dbReference>
<dbReference type="PDB" id="6J2N">
    <property type="method" value="EM"/>
    <property type="resolution" value="7.50 A"/>
    <property type="chains" value="Y=1-89"/>
</dbReference>
<dbReference type="PDB" id="6J2Q">
    <property type="method" value="EM"/>
    <property type="resolution" value="3.80 A"/>
    <property type="chains" value="Y=1-89"/>
</dbReference>
<dbReference type="PDB" id="6J2X">
    <property type="method" value="EM"/>
    <property type="resolution" value="3.80 A"/>
    <property type="chains" value="Y=1-89"/>
</dbReference>
<dbReference type="PDB" id="6J30">
    <property type="method" value="EM"/>
    <property type="resolution" value="4.50 A"/>
    <property type="chains" value="Y=1-89"/>
</dbReference>
<dbReference type="PDB" id="7EWF">
    <property type="method" value="X-ray"/>
    <property type="resolution" value="2.85 A"/>
    <property type="chains" value="C=1-89"/>
</dbReference>
<dbReference type="PDB" id="7EWM">
    <property type="method" value="X-ray"/>
    <property type="resolution" value="2.90 A"/>
    <property type="chains" value="C=1-89"/>
</dbReference>
<dbReference type="PDB" id="7QO3">
    <property type="method" value="EM"/>
    <property type="resolution" value="6.10 A"/>
    <property type="chains" value="Y=1-89"/>
</dbReference>
<dbReference type="PDB" id="7QO5">
    <property type="method" value="EM"/>
    <property type="resolution" value="6.00 A"/>
    <property type="chains" value="Y=1-89"/>
</dbReference>
<dbReference type="PDB" id="7QO6">
    <property type="method" value="EM"/>
    <property type="resolution" value="6.30 A"/>
    <property type="chains" value="Y=1-89"/>
</dbReference>
<dbReference type="PDB" id="8U8D">
    <property type="method" value="EM"/>
    <property type="resolution" value="3.04 A"/>
    <property type="chains" value="C=1-89"/>
</dbReference>
<dbReference type="PDB" id="8U8E">
    <property type="method" value="EM"/>
    <property type="resolution" value="3.33 A"/>
    <property type="chains" value="C=1-89"/>
</dbReference>
<dbReference type="PDBsum" id="3JCK"/>
<dbReference type="PDBsum" id="3JCO"/>
<dbReference type="PDBsum" id="3JCP"/>
<dbReference type="PDBsum" id="3T5V"/>
<dbReference type="PDBsum" id="4CR2"/>
<dbReference type="PDBsum" id="4CR3"/>
<dbReference type="PDBsum" id="4CR4"/>
<dbReference type="PDBsum" id="4TRQ"/>
<dbReference type="PDBsum" id="5A5B"/>
<dbReference type="PDBsum" id="5G5P"/>
<dbReference type="PDBsum" id="5L3T"/>
<dbReference type="PDBsum" id="5MPB"/>
<dbReference type="PDBsum" id="5MPC"/>
<dbReference type="PDBsum" id="5MPD"/>
<dbReference type="PDBsum" id="5MPE"/>
<dbReference type="PDBsum" id="5UBP"/>
<dbReference type="PDBsum" id="5WVI"/>
<dbReference type="PDBsum" id="5WVK"/>
<dbReference type="PDBsum" id="6FVT"/>
<dbReference type="PDBsum" id="6FVU"/>
<dbReference type="PDBsum" id="6FVV"/>
<dbReference type="PDBsum" id="6FVW"/>
<dbReference type="PDBsum" id="6FVX"/>
<dbReference type="PDBsum" id="6FVY"/>
<dbReference type="PDBsum" id="6J2C"/>
<dbReference type="PDBsum" id="6J2N"/>
<dbReference type="PDBsum" id="6J2Q"/>
<dbReference type="PDBsum" id="6J2X"/>
<dbReference type="PDBsum" id="6J30"/>
<dbReference type="PDBsum" id="7EWF"/>
<dbReference type="PDBsum" id="7EWM"/>
<dbReference type="PDBsum" id="7QO3"/>
<dbReference type="PDBsum" id="7QO5"/>
<dbReference type="PDBsum" id="7QO6"/>
<dbReference type="PDBsum" id="8U8D"/>
<dbReference type="PDBsum" id="8U8E"/>
<dbReference type="EMDB" id="EMD-14082"/>
<dbReference type="EMDB" id="EMD-14084"/>
<dbReference type="EMDB" id="EMD-14085"/>
<dbReference type="EMDB" id="EMD-3136"/>
<dbReference type="EMDB" id="EMD-3440"/>
<dbReference type="EMDB" id="EMD-3536"/>
<dbReference type="EMDB" id="EMD-3537"/>
<dbReference type="EMDB" id="EMD-4321"/>
<dbReference type="EMDB" id="EMD-4322"/>
<dbReference type="EMDB" id="EMD-4323"/>
<dbReference type="EMDB" id="EMD-4324"/>
<dbReference type="EMDB" id="EMD-6479"/>
<dbReference type="EMDB" id="EMD-6693"/>
<dbReference type="EMDB" id="EMD-6694"/>
<dbReference type="EMDB" id="EMD-9769"/>
<dbReference type="EMDB" id="EMD-9770"/>
<dbReference type="EMDB" id="EMD-9771"/>
<dbReference type="EMDB" id="EMD-9772"/>
<dbReference type="EMDB" id="EMD-9773"/>
<dbReference type="SMR" id="O94742"/>
<dbReference type="BioGRID" id="32420">
    <property type="interactions" value="513"/>
</dbReference>
<dbReference type="ComplexPortal" id="CPX-1686">
    <property type="entry name" value="TREX-2 transcription-export complex"/>
</dbReference>
<dbReference type="ComplexPortal" id="CPX-2262">
    <property type="entry name" value="26S proteasome complex"/>
</dbReference>
<dbReference type="DIP" id="DIP-8754N"/>
<dbReference type="FunCoup" id="O94742">
    <property type="interactions" value="289"/>
</dbReference>
<dbReference type="IntAct" id="O94742">
    <property type="interactions" value="42"/>
</dbReference>
<dbReference type="MINT" id="O94742"/>
<dbReference type="STRING" id="4932.YDR363W-A"/>
<dbReference type="iPTMnet" id="O94742"/>
<dbReference type="PaxDb" id="4932-YDR363W-A"/>
<dbReference type="PeptideAtlas" id="O94742"/>
<dbReference type="EnsemblFungi" id="YDR363W-A_mRNA">
    <property type="protein sequence ID" value="YDR363W-A"/>
    <property type="gene ID" value="YDR363W-A"/>
</dbReference>
<dbReference type="GeneID" id="851967"/>
<dbReference type="KEGG" id="sce:YDR363W-A"/>
<dbReference type="AGR" id="SGD:S000007235"/>
<dbReference type="SGD" id="S000007235">
    <property type="gene designation" value="SEM1"/>
</dbReference>
<dbReference type="VEuPathDB" id="FungiDB:YDR363W-A"/>
<dbReference type="eggNOG" id="KOG4764">
    <property type="taxonomic scope" value="Eukaryota"/>
</dbReference>
<dbReference type="HOGENOM" id="CLU_141774_1_0_1"/>
<dbReference type="InParanoid" id="O94742"/>
<dbReference type="OMA" id="IWEENWD"/>
<dbReference type="BioCyc" id="YEAST:G3O-30088-MONOMER"/>
<dbReference type="BioGRID-ORCS" id="851967">
    <property type="hits" value="1 hit in 10 CRISPR screens"/>
</dbReference>
<dbReference type="PRO" id="PR:O94742"/>
<dbReference type="Proteomes" id="UP000002311">
    <property type="component" value="Chromosome IV"/>
</dbReference>
<dbReference type="RNAct" id="O94742">
    <property type="molecule type" value="protein"/>
</dbReference>
<dbReference type="GO" id="GO:0005829">
    <property type="term" value="C:cytosol"/>
    <property type="evidence" value="ECO:0000314"/>
    <property type="project" value="SGD"/>
</dbReference>
<dbReference type="GO" id="GO:0000502">
    <property type="term" value="C:proteasome complex"/>
    <property type="evidence" value="ECO:0000353"/>
    <property type="project" value="ComplexPortal"/>
</dbReference>
<dbReference type="GO" id="GO:0008541">
    <property type="term" value="C:proteasome regulatory particle, lid subcomplex"/>
    <property type="evidence" value="ECO:0000314"/>
    <property type="project" value="SGD"/>
</dbReference>
<dbReference type="GO" id="GO:0034515">
    <property type="term" value="C:proteasome storage granule"/>
    <property type="evidence" value="ECO:0000314"/>
    <property type="project" value="SGD"/>
</dbReference>
<dbReference type="GO" id="GO:0070390">
    <property type="term" value="C:transcription export complex 2"/>
    <property type="evidence" value="ECO:0000314"/>
    <property type="project" value="SGD"/>
</dbReference>
<dbReference type="GO" id="GO:0060090">
    <property type="term" value="F:molecular adaptor activity"/>
    <property type="evidence" value="ECO:0000270"/>
    <property type="project" value="DisProt"/>
</dbReference>
<dbReference type="GO" id="GO:0044183">
    <property type="term" value="F:protein folding chaperone"/>
    <property type="evidence" value="ECO:0000270"/>
    <property type="project" value="DisProt"/>
</dbReference>
<dbReference type="GO" id="GO:0000724">
    <property type="term" value="P:double-strand break repair via homologous recombination"/>
    <property type="evidence" value="ECO:0000318"/>
    <property type="project" value="GO_Central"/>
</dbReference>
<dbReference type="GO" id="GO:0030447">
    <property type="term" value="P:filamentous growth"/>
    <property type="evidence" value="ECO:0000315"/>
    <property type="project" value="SGD"/>
</dbReference>
<dbReference type="GO" id="GO:0035753">
    <property type="term" value="P:maintenance of DNA trinucleotide repeats"/>
    <property type="evidence" value="ECO:0000315"/>
    <property type="project" value="SGD"/>
</dbReference>
<dbReference type="GO" id="GO:0006406">
    <property type="term" value="P:mRNA export from nucleus"/>
    <property type="evidence" value="ECO:0000315"/>
    <property type="project" value="SGD"/>
</dbReference>
<dbReference type="GO" id="GO:0045944">
    <property type="term" value="P:positive regulation of transcription by RNA polymerase II"/>
    <property type="evidence" value="ECO:0000303"/>
    <property type="project" value="ComplexPortal"/>
</dbReference>
<dbReference type="GO" id="GO:0043248">
    <property type="term" value="P:proteasome assembly"/>
    <property type="evidence" value="ECO:0000315"/>
    <property type="project" value="SGD"/>
</dbReference>
<dbReference type="GO" id="GO:0043161">
    <property type="term" value="P:proteasome-mediated ubiquitin-dependent protein catabolic process"/>
    <property type="evidence" value="ECO:0000314"/>
    <property type="project" value="SGD"/>
</dbReference>
<dbReference type="GO" id="GO:0051726">
    <property type="term" value="P:regulation of cell cycle"/>
    <property type="evidence" value="ECO:0000315"/>
    <property type="project" value="SGD"/>
</dbReference>
<dbReference type="GO" id="GO:0072742">
    <property type="term" value="P:SAGA complex localization to transcription regulatory region"/>
    <property type="evidence" value="ECO:0000315"/>
    <property type="project" value="SGD"/>
</dbReference>
<dbReference type="GO" id="GO:0006511">
    <property type="term" value="P:ubiquitin-dependent protein catabolic process"/>
    <property type="evidence" value="ECO:0000315"/>
    <property type="project" value="SGD"/>
</dbReference>
<dbReference type="CDD" id="cd13768">
    <property type="entry name" value="DSS1_Sem1"/>
    <property type="match status" value="1"/>
</dbReference>
<dbReference type="DisProt" id="DP01014"/>
<dbReference type="Gene3D" id="6.10.250.1210">
    <property type="match status" value="1"/>
</dbReference>
<dbReference type="InterPro" id="IPR007834">
    <property type="entry name" value="DSS1_SEM1"/>
</dbReference>
<dbReference type="PANTHER" id="PTHR16771">
    <property type="entry name" value="26 PROTEASOME COMPLEX SUBUNIT DSS1"/>
    <property type="match status" value="1"/>
</dbReference>
<dbReference type="PANTHER" id="PTHR16771:SF0">
    <property type="entry name" value="26S PROTEASOME COMPLEX SUBUNIT SEM1"/>
    <property type="match status" value="1"/>
</dbReference>
<dbReference type="Pfam" id="PF05160">
    <property type="entry name" value="DSS1_SEM1"/>
    <property type="match status" value="1"/>
</dbReference>
<dbReference type="SMART" id="SM01385">
    <property type="entry name" value="DSS1_SEM1"/>
    <property type="match status" value="1"/>
</dbReference>
<comment type="function">
    <text evidence="2 4">Versatile protein that might stabilize multiple protein complexes involved in diverse pathways. Subunit of the 26S proteasome which plays a role in ubiquitin-dependent proteolysis. Also associates with the TREX-2 complex that is required for transcription-coupled mRNA export, and the COP9 signalosome, which is involved in deneddylation.</text>
</comment>
<comment type="subunit">
    <text evidence="3 4">Part of the 26S proteasome. Associates with the nuclear pore complex (NPC)-associated TREX-2 complex and the COP9 signalosome. Interacts with CSN12 and THP3.</text>
</comment>
<comment type="interaction">
    <interactant intactId="EBI-31337">
        <id>O94742</id>
    </interactant>
    <interactant intactId="EBI-21152">
        <id>P38348</id>
        <label>HSM3</label>
    </interactant>
    <organismsDiffer>false</organismsDiffer>
    <experiments>3</experiments>
</comment>
<comment type="interaction">
    <interactant intactId="EBI-31337">
        <id>O94742</id>
    </interactant>
    <interactant intactId="EBI-13988">
        <id>P22141</id>
        <label>PRE1</label>
    </interactant>
    <organismsDiffer>false</organismsDiffer>
    <experiments>2</experiments>
</comment>
<comment type="interaction">
    <interactant intactId="EBI-31337">
        <id>O94742</id>
    </interactant>
    <interactant intactId="EBI-15919">
        <id>P32565</id>
        <label>RPN2</label>
    </interactant>
    <organismsDiffer>false</organismsDiffer>
    <experiments>2</experiments>
</comment>
<comment type="interaction">
    <interactant intactId="EBI-31337">
        <id>O94742</id>
    </interactant>
    <interactant intactId="EBI-15927">
        <id>P40016</id>
        <label>RPN3</label>
    </interactant>
    <organismsDiffer>false</organismsDiffer>
    <experiments>2</experiments>
</comment>
<comment type="interaction">
    <interactant intactId="EBI-31337">
        <id>O94742</id>
    </interactant>
    <interactant intactId="EBI-15940">
        <id>Q06103</id>
        <label>RPN7</label>
    </interactant>
    <organismsDiffer>false</organismsDiffer>
    <experiments>4</experiments>
</comment>
<comment type="interaction">
    <interactant intactId="EBI-31337">
        <id>O94742</id>
    </interactant>
    <interactant intactId="EBI-13910">
        <id>P33299</id>
        <label>RPT1</label>
    </interactant>
    <organismsDiffer>false</organismsDiffer>
    <experiments>2</experiments>
</comment>
<comment type="interaction">
    <interactant intactId="EBI-31337">
        <id>O94742</id>
    </interactant>
    <interactant intactId="EBI-13914">
        <id>Q01939</id>
        <label>RPT6</label>
    </interactant>
    <organismsDiffer>false</organismsDiffer>
    <experiments>2</experiments>
</comment>
<comment type="interaction">
    <interactant intactId="EBI-31337">
        <id>O94742</id>
    </interactant>
    <interactant intactId="EBI-32097">
        <id>Q08231</id>
        <label>THP1</label>
    </interactant>
    <organismsDiffer>false</organismsDiffer>
    <experiments>2</experiments>
</comment>
<comment type="disruption phenotype">
    <text evidence="4">Impairs mRNA export and transcription elongation, and induces strong transcription-associated hyperrecombination phenotypes.</text>
</comment>
<comment type="miscellaneous">
    <text evidence="1">Present with 5590 molecules/cell in log phase SD medium.</text>
</comment>
<comment type="similarity">
    <text evidence="5">Belongs to the DSS1/SEM1 family.</text>
</comment>
<accession>O94742</accession>
<accession>D6VSZ2</accession>
<gene>
    <name type="primary">SEM1</name>
    <name type="synonym">DSH1</name>
    <name type="ordered locus">YDR363W-A</name>
</gene>
<proteinExistence type="evidence at protein level"/>
<name>SEM1_YEAST</name>
<evidence type="ECO:0000269" key="1">
    <source>
    </source>
</evidence>
<evidence type="ECO:0000269" key="2">
    <source>
    </source>
</evidence>
<evidence type="ECO:0000269" key="3">
    <source>
    </source>
</evidence>
<evidence type="ECO:0000269" key="4">
    <source>
    </source>
</evidence>
<evidence type="ECO:0000305" key="5"/>
<evidence type="ECO:0007744" key="6">
    <source>
    </source>
</evidence>
<evidence type="ECO:0007829" key="7">
    <source>
        <dbReference type="PDB" id="5UBP"/>
    </source>
</evidence>
<evidence type="ECO:0007829" key="8">
    <source>
        <dbReference type="PDB" id="7EWF"/>
    </source>
</evidence>
<evidence type="ECO:0007829" key="9">
    <source>
        <dbReference type="PDB" id="7EWM"/>
    </source>
</evidence>
<sequence>MSTDVAAAQAQSKIDLTKKKNEEINKKSLEEDDEFEDFPIDTWANGETIKSNAVTQTNIWEENWDDVEVDDDFTNELKAELDRYKRENQ</sequence>
<reference key="1">
    <citation type="journal article" date="1999" name="Proc. Natl. Acad. Sci. U.S.A.">
        <title>SEM1, a homologue of the split hand/split foot malformation candidate gene Dss1, regulates exocytosis and pseudohyphal differentiation in yeast.</title>
        <authorList>
            <person name="Jantti J."/>
            <person name="Lahdenranta J."/>
            <person name="Olkkonen V.M."/>
            <person name="Soderlund H."/>
            <person name="Keranen S."/>
        </authorList>
    </citation>
    <scope>NUCLEOTIDE SEQUENCE [MRNA]</scope>
</reference>
<reference key="2">
    <citation type="submission" date="1998-05" db="EMBL/GenBank/DDBJ databases">
        <authorList>
            <person name="DeHoratius C."/>
            <person name="Green M.R."/>
        </authorList>
    </citation>
    <scope>NUCLEOTIDE SEQUENCE [GENOMIC DNA]</scope>
    <source>
        <strain>ATCC 90840 / EAY235 / FY23</strain>
    </source>
</reference>
<reference key="3">
    <citation type="journal article" date="1997" name="Nature">
        <title>The nucleotide sequence of Saccharomyces cerevisiae chromosome IV.</title>
        <authorList>
            <person name="Jacq C."/>
            <person name="Alt-Moerbe J."/>
            <person name="Andre B."/>
            <person name="Arnold W."/>
            <person name="Bahr A."/>
            <person name="Ballesta J.P.G."/>
            <person name="Bargues M."/>
            <person name="Baron L."/>
            <person name="Becker A."/>
            <person name="Biteau N."/>
            <person name="Bloecker H."/>
            <person name="Blugeon C."/>
            <person name="Boskovic J."/>
            <person name="Brandt P."/>
            <person name="Brueckner M."/>
            <person name="Buitrago M.J."/>
            <person name="Coster F."/>
            <person name="Delaveau T."/>
            <person name="del Rey F."/>
            <person name="Dujon B."/>
            <person name="Eide L.G."/>
            <person name="Garcia-Cantalejo J.M."/>
            <person name="Goffeau A."/>
            <person name="Gomez-Peris A."/>
            <person name="Granotier C."/>
            <person name="Hanemann V."/>
            <person name="Hankeln T."/>
            <person name="Hoheisel J.D."/>
            <person name="Jaeger W."/>
            <person name="Jimenez A."/>
            <person name="Jonniaux J.-L."/>
            <person name="Kraemer C."/>
            <person name="Kuester H."/>
            <person name="Laamanen P."/>
            <person name="Legros Y."/>
            <person name="Louis E.J."/>
            <person name="Moeller-Rieker S."/>
            <person name="Monnet A."/>
            <person name="Moro M."/>
            <person name="Mueller-Auer S."/>
            <person name="Nussbaumer B."/>
            <person name="Paricio N."/>
            <person name="Paulin L."/>
            <person name="Perea J."/>
            <person name="Perez-Alonso M."/>
            <person name="Perez-Ortin J.E."/>
            <person name="Pohl T.M."/>
            <person name="Prydz H."/>
            <person name="Purnelle B."/>
            <person name="Rasmussen S.W."/>
            <person name="Remacha M.A."/>
            <person name="Revuelta J.L."/>
            <person name="Rieger M."/>
            <person name="Salom D."/>
            <person name="Saluz H.P."/>
            <person name="Saiz J.E."/>
            <person name="Saren A.-M."/>
            <person name="Schaefer M."/>
            <person name="Scharfe M."/>
            <person name="Schmidt E.R."/>
            <person name="Schneider C."/>
            <person name="Scholler P."/>
            <person name="Schwarz S."/>
            <person name="Soler-Mira A."/>
            <person name="Urrestarazu L.A."/>
            <person name="Verhasselt P."/>
            <person name="Vissers S."/>
            <person name="Voet M."/>
            <person name="Volckaert G."/>
            <person name="Wagner G."/>
            <person name="Wambutt R."/>
            <person name="Wedler E."/>
            <person name="Wedler H."/>
            <person name="Woelfl S."/>
            <person name="Harris D.E."/>
            <person name="Bowman S."/>
            <person name="Brown D."/>
            <person name="Churcher C.M."/>
            <person name="Connor R."/>
            <person name="Dedman K."/>
            <person name="Gentles S."/>
            <person name="Hamlin N."/>
            <person name="Hunt S."/>
            <person name="Jones L."/>
            <person name="McDonald S."/>
            <person name="Murphy L.D."/>
            <person name="Niblett D."/>
            <person name="Odell C."/>
            <person name="Oliver K."/>
            <person name="Rajandream M.A."/>
            <person name="Richards C."/>
            <person name="Shore L."/>
            <person name="Walsh S.V."/>
            <person name="Barrell B.G."/>
            <person name="Dietrich F.S."/>
            <person name="Mulligan J.T."/>
            <person name="Allen E."/>
            <person name="Araujo R."/>
            <person name="Aviles E."/>
            <person name="Berno A."/>
            <person name="Carpenter J."/>
            <person name="Chen E."/>
            <person name="Cherry J.M."/>
            <person name="Chung E."/>
            <person name="Duncan M."/>
            <person name="Hunicke-Smith S."/>
            <person name="Hyman R.W."/>
            <person name="Komp C."/>
            <person name="Lashkari D."/>
            <person name="Lew H."/>
            <person name="Lin D."/>
            <person name="Mosedale D."/>
            <person name="Nakahara K."/>
            <person name="Namath A."/>
            <person name="Oefner P."/>
            <person name="Oh C."/>
            <person name="Petel F.X."/>
            <person name="Roberts D."/>
            <person name="Schramm S."/>
            <person name="Schroeder M."/>
            <person name="Shogren T."/>
            <person name="Shroff N."/>
            <person name="Winant A."/>
            <person name="Yelton M.A."/>
            <person name="Botstein D."/>
            <person name="Davis R.W."/>
            <person name="Johnston M."/>
            <person name="Andrews S."/>
            <person name="Brinkman R."/>
            <person name="Cooper J."/>
            <person name="Ding H."/>
            <person name="Du Z."/>
            <person name="Favello A."/>
            <person name="Fulton L."/>
            <person name="Gattung S."/>
            <person name="Greco T."/>
            <person name="Hallsworth K."/>
            <person name="Hawkins J."/>
            <person name="Hillier L.W."/>
            <person name="Jier M."/>
            <person name="Johnson D."/>
            <person name="Johnston L."/>
            <person name="Kirsten J."/>
            <person name="Kucaba T."/>
            <person name="Langston Y."/>
            <person name="Latreille P."/>
            <person name="Le T."/>
            <person name="Mardis E."/>
            <person name="Menezes S."/>
            <person name="Miller N."/>
            <person name="Nhan M."/>
            <person name="Pauley A."/>
            <person name="Peluso D."/>
            <person name="Rifkin L."/>
            <person name="Riles L."/>
            <person name="Taich A."/>
            <person name="Trevaskis E."/>
            <person name="Vignati D."/>
            <person name="Wilcox L."/>
            <person name="Wohldman P."/>
            <person name="Vaudin M."/>
            <person name="Wilson R."/>
            <person name="Waterston R."/>
            <person name="Albermann K."/>
            <person name="Hani J."/>
            <person name="Heumann K."/>
            <person name="Kleine K."/>
            <person name="Mewes H.-W."/>
            <person name="Zollner A."/>
            <person name="Zaccaria P."/>
        </authorList>
    </citation>
    <scope>NUCLEOTIDE SEQUENCE [LARGE SCALE GENOMIC DNA]</scope>
    <source>
        <strain>ATCC 204508 / S288c</strain>
    </source>
</reference>
<reference key="4">
    <citation type="journal article" date="2014" name="G3 (Bethesda)">
        <title>The reference genome sequence of Saccharomyces cerevisiae: Then and now.</title>
        <authorList>
            <person name="Engel S.R."/>
            <person name="Dietrich F.S."/>
            <person name="Fisk D.G."/>
            <person name="Binkley G."/>
            <person name="Balakrishnan R."/>
            <person name="Costanzo M.C."/>
            <person name="Dwight S.S."/>
            <person name="Hitz B.C."/>
            <person name="Karra K."/>
            <person name="Nash R.S."/>
            <person name="Weng S."/>
            <person name="Wong E.D."/>
            <person name="Lloyd P."/>
            <person name="Skrzypek M.S."/>
            <person name="Miyasato S.R."/>
            <person name="Simison M."/>
            <person name="Cherry J.M."/>
        </authorList>
    </citation>
    <scope>GENOME REANNOTATION</scope>
    <source>
        <strain>ATCC 204508 / S288c</strain>
    </source>
</reference>
<reference key="5">
    <citation type="journal article" date="2007" name="Genome Res.">
        <title>Approaching a complete repository of sequence-verified protein-encoding clones for Saccharomyces cerevisiae.</title>
        <authorList>
            <person name="Hu Y."/>
            <person name="Rolfs A."/>
            <person name="Bhullar B."/>
            <person name="Murthy T.V.S."/>
            <person name="Zhu C."/>
            <person name="Berger M.F."/>
            <person name="Camargo A.A."/>
            <person name="Kelley F."/>
            <person name="McCarron S."/>
            <person name="Jepson D."/>
            <person name="Richardson A."/>
            <person name="Raphael J."/>
            <person name="Moreira D."/>
            <person name="Taycher E."/>
            <person name="Zuo D."/>
            <person name="Mohr S."/>
            <person name="Kane M.F."/>
            <person name="Williamson J."/>
            <person name="Simpson A.J.G."/>
            <person name="Bulyk M.L."/>
            <person name="Harlow E."/>
            <person name="Marsischky G."/>
            <person name="Kolodner R.D."/>
            <person name="LaBaer J."/>
        </authorList>
    </citation>
    <scope>NUCLEOTIDE SEQUENCE [GENOMIC DNA]</scope>
    <source>
        <strain>ATCC 204508 / S288c</strain>
    </source>
</reference>
<reference key="6">
    <citation type="journal article" date="2005" name="Mol. Cell. Proteomics">
        <title>Quantitative phosphoproteomics applied to the yeast pheromone signaling pathway.</title>
        <authorList>
            <person name="Gruhler A."/>
            <person name="Olsen J.V."/>
            <person name="Mohammed S."/>
            <person name="Mortensen P."/>
            <person name="Faergeman N.J."/>
            <person name="Mann M."/>
            <person name="Jensen O.N."/>
        </authorList>
    </citation>
    <scope>ACETYLATION [LARGE SCALE ANALYSIS] AT SER-2</scope>
    <scope>PHOSPHORYLATION [LARGE SCALE ANALYSIS] AT SER-12</scope>
    <scope>CLEAVAGE OF INITIATOR METHIONINE [LARGE SCALE ANALYSIS]</scope>
    <scope>IDENTIFICATION BY MASS SPECTROMETRY [LARGE SCALE ANALYSIS]</scope>
    <source>
        <strain>YAL6B</strain>
    </source>
</reference>
<reference key="7">
    <citation type="journal article" date="2008" name="Mol. Cell">
        <title>A genetic interaction map of RNA-processing factors reveals links between Sem1/Dss1-containing complexes and mRNA export and splicing.</title>
        <authorList>
            <person name="Wilmes G.M."/>
            <person name="Bergkessel M."/>
            <person name="Bandyopadhyay S."/>
            <person name="Shales M."/>
            <person name="Braberg H."/>
            <person name="Cagney G."/>
            <person name="Collins S.R."/>
            <person name="Whitworth G.B."/>
            <person name="Kress T.L."/>
            <person name="Weissman J.S."/>
            <person name="Ideker T."/>
            <person name="Guthrie C."/>
            <person name="Krogan N.J."/>
        </authorList>
    </citation>
    <scope>INTERACTION WITH CSN12 AND THP3</scope>
</reference>
<reference key="8">
    <citation type="journal article" date="2003" name="Nature">
        <title>Global analysis of protein expression in yeast.</title>
        <authorList>
            <person name="Ghaemmaghami S."/>
            <person name="Huh W.-K."/>
            <person name="Bower K."/>
            <person name="Howson R.W."/>
            <person name="Belle A."/>
            <person name="Dephoure N."/>
            <person name="O'Shea E.K."/>
            <person name="Weissman J.S."/>
        </authorList>
    </citation>
    <scope>LEVEL OF PROTEIN EXPRESSION [LARGE SCALE ANALYSIS]</scope>
</reference>
<reference key="9">
    <citation type="journal article" date="2009" name="J. Cell Biol.">
        <title>Sem1 is a functional component of the nuclear pore complex-associated messenger RNA export machinery.</title>
        <authorList>
            <person name="Faza M.B."/>
            <person name="Kemmler S."/>
            <person name="Jimeno S."/>
            <person name="Gonzalez-Aguilera C."/>
            <person name="Aguilera A."/>
            <person name="Hurt E."/>
            <person name="Panse V.G."/>
        </authorList>
    </citation>
    <scope>DISRUPTION PHENOTYPE</scope>
    <scope>FUNCTION</scope>
    <scope>SUBUNIT</scope>
    <scope>INTERACTION WITH CSN12 AND THP3</scope>
</reference>
<reference key="10">
    <citation type="journal article" date="2004" name="J. Biol. Chem.">
        <title>Sem1p is a novel subunit of the 26S proteasome from Saccharomyces cerevisiae.</title>
        <authorList>
            <person name="Sone T."/>
            <person name="Saeki Y."/>
            <person name="Toh-e A."/>
            <person name="Yokosawa H."/>
        </authorList>
    </citation>
    <scope>FUNCTION</scope>
</reference>
<keyword id="KW-0002">3D-structure</keyword>
<keyword id="KW-0007">Acetylation</keyword>
<keyword id="KW-0597">Phosphoprotein</keyword>
<keyword id="KW-0647">Proteasome</keyword>
<keyword id="KW-1185">Reference proteome</keyword>
<keyword id="KW-0804">Transcription</keyword>
<organism>
    <name type="scientific">Saccharomyces cerevisiae (strain ATCC 204508 / S288c)</name>
    <name type="common">Baker's yeast</name>
    <dbReference type="NCBI Taxonomy" id="559292"/>
    <lineage>
        <taxon>Eukaryota</taxon>
        <taxon>Fungi</taxon>
        <taxon>Dikarya</taxon>
        <taxon>Ascomycota</taxon>
        <taxon>Saccharomycotina</taxon>
        <taxon>Saccharomycetes</taxon>
        <taxon>Saccharomycetales</taxon>
        <taxon>Saccharomycetaceae</taxon>
        <taxon>Saccharomyces</taxon>
    </lineage>
</organism>
<protein>
    <recommendedName>
        <fullName>26S proteasome complex subunit SEM1</fullName>
    </recommendedName>
</protein>